<keyword id="KW-0204">Cytolysis</keyword>
<keyword id="KW-1061">Dermonecrotic toxin</keyword>
<keyword id="KW-1015">Disulfide bond</keyword>
<keyword id="KW-0325">Glycoprotein</keyword>
<keyword id="KW-0354">Hemolysis</keyword>
<keyword id="KW-0442">Lipid degradation</keyword>
<keyword id="KW-0443">Lipid metabolism</keyword>
<keyword id="KW-0456">Lyase</keyword>
<keyword id="KW-0460">Magnesium</keyword>
<keyword id="KW-0479">Metal-binding</keyword>
<keyword id="KW-0964">Secreted</keyword>
<keyword id="KW-0800">Toxin</keyword>
<sequence>LDMGHMVNAIAQIDEFVNLGANSIETDVSFDDSANPEYTYHGVPCDCGGTCTKWEYFNEFLKGLRKATTPGDSKYHEKLVLVVFDLKTSSLYDNQASDAGKKLAKSLLQNYWNNGNNGGRAYIVLSIPNLAHYKLITGFKETLTSEGHPELMDKVGYDFSGNDEIGDVAKTYKKAGVTGHVWQSDGITNCLLRGLDRVRKAVANRDSSNGYINKVYYWTVDKRATTRDALDAGVDGIMTNYPDVIADVLNESAYKAKFRIASYDDNPWETFKN</sequence>
<comment type="function">
    <text evidence="1 3">Dermonecrotic toxins cleave the phosphodiester linkage between the phosphate and headgroup of certain phospholipids (sphingolipid and lysolipid substrates), forming an alcohol (often choline) and a cyclic phosphate (By similarity). This toxin acts on sphingomyelin (SM) (By similarity). It may also act on ceramide phosphoethanolamine (CPE), lysophosphatidylcholine (LPC) and lysophosphatidylethanolamine (LPE), but not on lysophosphatidylserine (LPS), and lysophosphatidylglycerol (LPG) (By similarity). It acts by transphosphatidylation, releasing exclusively cyclic phosphate products as second products (By similarity). Induces dermonecrosis, hemolysis, increased vascular permeability, edema, inflammatory response, and platelet aggregation (By similarity).</text>
</comment>
<comment type="catalytic activity">
    <reaction evidence="1">
        <text>an N-(acyl)-sphingosylphosphocholine = an N-(acyl)-sphingosyl-1,3-cyclic phosphate + choline</text>
        <dbReference type="Rhea" id="RHEA:60652"/>
        <dbReference type="ChEBI" id="CHEBI:15354"/>
        <dbReference type="ChEBI" id="CHEBI:64583"/>
        <dbReference type="ChEBI" id="CHEBI:143892"/>
    </reaction>
</comment>
<comment type="catalytic activity">
    <reaction evidence="1">
        <text>an N-(acyl)-sphingosylphosphoethanolamine = an N-(acyl)-sphingosyl-1,3-cyclic phosphate + ethanolamine</text>
        <dbReference type="Rhea" id="RHEA:60648"/>
        <dbReference type="ChEBI" id="CHEBI:57603"/>
        <dbReference type="ChEBI" id="CHEBI:143891"/>
        <dbReference type="ChEBI" id="CHEBI:143892"/>
    </reaction>
</comment>
<comment type="catalytic activity">
    <reaction evidence="1">
        <text>a 1-acyl-sn-glycero-3-phosphocholine = a 1-acyl-sn-glycero-2,3-cyclic phosphate + choline</text>
        <dbReference type="Rhea" id="RHEA:60700"/>
        <dbReference type="ChEBI" id="CHEBI:15354"/>
        <dbReference type="ChEBI" id="CHEBI:58168"/>
        <dbReference type="ChEBI" id="CHEBI:143947"/>
    </reaction>
</comment>
<comment type="catalytic activity">
    <reaction evidence="1">
        <text>a 1-acyl-sn-glycero-3-phosphoethanolamine = a 1-acyl-sn-glycero-2,3-cyclic phosphate + ethanolamine</text>
        <dbReference type="Rhea" id="RHEA:60704"/>
        <dbReference type="ChEBI" id="CHEBI:57603"/>
        <dbReference type="ChEBI" id="CHEBI:64381"/>
        <dbReference type="ChEBI" id="CHEBI:143947"/>
    </reaction>
</comment>
<comment type="cofactor">
    <cofactor evidence="5">
        <name>Mg(2+)</name>
        <dbReference type="ChEBI" id="CHEBI:18420"/>
    </cofactor>
    <text evidence="5">Binds 1 Mg(2+) ion per subunit.</text>
</comment>
<comment type="subcellular location">
    <subcellularLocation>
        <location evidence="9">Secreted</location>
    </subcellularLocation>
</comment>
<comment type="tissue specificity">
    <text evidence="9">Expressed by the venom gland.</text>
</comment>
<comment type="similarity">
    <text evidence="8">Belongs to the arthropod phospholipase D family. Class II subfamily.</text>
</comment>
<comment type="caution">
    <text evidence="1 2 4">The most common activity assay for dermonecrotic toxins detects enzymatic activity by monitoring choline release from substrate. Liberation of choline from sphingomyelin (SM) or lysophosphatidylcholine (LPC) is commonly assumed to result from substrate hydrolysis, giving either ceramide-1-phosphate (C1P) or lysophosphatidic acid (LPA), respectively, as a second product. However, two studies from Lajoie and colleagues (2013 and 2015) report the observation of exclusive formation of cyclic phosphate products as second products, resulting from intramolecular transphosphatidylation. Cyclic phosphates have vastly different biological properties from their monoester counterparts, and they may be relevant to the pathology of brown spider envenomation.</text>
</comment>
<reference key="1">
    <citation type="journal article" date="2009" name="Mol. Biol. Evol.">
        <title>Molecular evolution, functional variation, and proposed nomenclature of the gene family that includes sphingomyelinase D in sicariid spider venoms.</title>
        <authorList>
            <person name="Binford G.J."/>
            <person name="Bodner M.R."/>
            <person name="Cordes M.H."/>
            <person name="Baldwin K.L."/>
            <person name="Rynerson M.R."/>
            <person name="Burns S.N."/>
            <person name="Zobel-Thropp P.A."/>
        </authorList>
    </citation>
    <scope>NUCLEOTIDE SEQUENCE [MRNA]</scope>
    <scope>NOMENCLATURE</scope>
    <source>
        <tissue>Venom gland</tissue>
    </source>
</reference>
<accession>C0JAW4</accession>
<feature type="chain" id="PRO_0000392783" description="Dermonecrotic toxin LdSicTox-alphaIB1bi">
    <location>
        <begin position="1" status="less than"/>
        <end position="273"/>
    </location>
</feature>
<feature type="active site" evidence="5">
    <location>
        <position position="5"/>
    </location>
</feature>
<feature type="active site" description="Nucleophile" evidence="5">
    <location>
        <position position="41"/>
    </location>
</feature>
<feature type="binding site" evidence="5">
    <location>
        <position position="25"/>
    </location>
    <ligand>
        <name>Mg(2+)</name>
        <dbReference type="ChEBI" id="CHEBI:18420"/>
    </ligand>
</feature>
<feature type="binding site" evidence="5">
    <location>
        <position position="27"/>
    </location>
    <ligand>
        <name>Mg(2+)</name>
        <dbReference type="ChEBI" id="CHEBI:18420"/>
    </ligand>
</feature>
<feature type="binding site" evidence="5">
    <location>
        <position position="85"/>
    </location>
    <ligand>
        <name>Mg(2+)</name>
        <dbReference type="ChEBI" id="CHEBI:18420"/>
    </ligand>
</feature>
<feature type="glycosylation site" description="N-linked (GlcNAc...) asparagine" evidence="6">
    <location>
        <position position="250"/>
    </location>
</feature>
<feature type="disulfide bond" evidence="3">
    <location>
        <begin position="45"/>
        <end position="51"/>
    </location>
</feature>
<feature type="disulfide bond" evidence="3">
    <location>
        <begin position="47"/>
        <end position="190"/>
    </location>
</feature>
<feature type="non-terminal residue">
    <location>
        <position position="1"/>
    </location>
</feature>
<evidence type="ECO:0000250" key="1">
    <source>
        <dbReference type="UniProtKB" id="A0A0D4WTV1"/>
    </source>
</evidence>
<evidence type="ECO:0000250" key="2">
    <source>
        <dbReference type="UniProtKB" id="A0A0D4WV12"/>
    </source>
</evidence>
<evidence type="ECO:0000250" key="3">
    <source>
        <dbReference type="UniProtKB" id="P0CE80"/>
    </source>
</evidence>
<evidence type="ECO:0000250" key="4">
    <source>
        <dbReference type="UniProtKB" id="Q4ZFU2"/>
    </source>
</evidence>
<evidence type="ECO:0000250" key="5">
    <source>
        <dbReference type="UniProtKB" id="Q8I914"/>
    </source>
</evidence>
<evidence type="ECO:0000255" key="6"/>
<evidence type="ECO:0000303" key="7">
    <source>
    </source>
</evidence>
<evidence type="ECO:0000305" key="8"/>
<evidence type="ECO:0000305" key="9">
    <source>
    </source>
</evidence>
<organism>
    <name type="scientific">Loxosceles deserta</name>
    <name type="common">Desert recluse spider</name>
    <dbReference type="NCBI Taxonomy" id="424440"/>
    <lineage>
        <taxon>Eukaryota</taxon>
        <taxon>Metazoa</taxon>
        <taxon>Ecdysozoa</taxon>
        <taxon>Arthropoda</taxon>
        <taxon>Chelicerata</taxon>
        <taxon>Arachnida</taxon>
        <taxon>Araneae</taxon>
        <taxon>Araneomorphae</taxon>
        <taxon>Haplogynae</taxon>
        <taxon>Scytodoidea</taxon>
        <taxon>Sicariidae</taxon>
        <taxon>Loxosceles</taxon>
    </lineage>
</organism>
<dbReference type="EC" id="4.6.1.-" evidence="4"/>
<dbReference type="EMBL" id="FJ171399">
    <property type="protein sequence ID" value="ACN48895.1"/>
    <property type="molecule type" value="mRNA"/>
</dbReference>
<dbReference type="SMR" id="C0JAW4"/>
<dbReference type="GO" id="GO:0005576">
    <property type="term" value="C:extracellular region"/>
    <property type="evidence" value="ECO:0007669"/>
    <property type="project" value="UniProtKB-SubCell"/>
</dbReference>
<dbReference type="GO" id="GO:0016829">
    <property type="term" value="F:lyase activity"/>
    <property type="evidence" value="ECO:0007669"/>
    <property type="project" value="UniProtKB-KW"/>
</dbReference>
<dbReference type="GO" id="GO:0046872">
    <property type="term" value="F:metal ion binding"/>
    <property type="evidence" value="ECO:0007669"/>
    <property type="project" value="UniProtKB-KW"/>
</dbReference>
<dbReference type="GO" id="GO:0008081">
    <property type="term" value="F:phosphoric diester hydrolase activity"/>
    <property type="evidence" value="ECO:0007669"/>
    <property type="project" value="InterPro"/>
</dbReference>
<dbReference type="GO" id="GO:0090729">
    <property type="term" value="F:toxin activity"/>
    <property type="evidence" value="ECO:0007669"/>
    <property type="project" value="UniProtKB-KW"/>
</dbReference>
<dbReference type="GO" id="GO:0031640">
    <property type="term" value="P:killing of cells of another organism"/>
    <property type="evidence" value="ECO:0007669"/>
    <property type="project" value="UniProtKB-KW"/>
</dbReference>
<dbReference type="GO" id="GO:0016042">
    <property type="term" value="P:lipid catabolic process"/>
    <property type="evidence" value="ECO:0007669"/>
    <property type="project" value="UniProtKB-KW"/>
</dbReference>
<dbReference type="CDD" id="cd08576">
    <property type="entry name" value="GDPD_like_SMaseD_PLD"/>
    <property type="match status" value="1"/>
</dbReference>
<dbReference type="Gene3D" id="3.20.20.190">
    <property type="entry name" value="Phosphatidylinositol (PI) phosphodiesterase"/>
    <property type="match status" value="1"/>
</dbReference>
<dbReference type="InterPro" id="IPR017946">
    <property type="entry name" value="PLC-like_Pdiesterase_TIM-brl"/>
</dbReference>
<dbReference type="Pfam" id="PF13653">
    <property type="entry name" value="GDPD_2"/>
    <property type="match status" value="1"/>
</dbReference>
<dbReference type="SUPFAM" id="SSF51695">
    <property type="entry name" value="PLC-like phosphodiesterases"/>
    <property type="match status" value="1"/>
</dbReference>
<proteinExistence type="evidence at transcript level"/>
<protein>
    <recommendedName>
        <fullName evidence="7">Dermonecrotic toxin LdSicTox-alphaIB1bi</fullName>
        <ecNumber evidence="4">4.6.1.-</ecNumber>
    </recommendedName>
    <alternativeName>
        <fullName>Phospholipase D</fullName>
        <shortName>PLD</shortName>
    </alternativeName>
    <alternativeName>
        <fullName>Sphingomyelin phosphodiesterase D</fullName>
        <shortName>SMD</shortName>
        <shortName>SMase D</shortName>
        <shortName>Sphingomyelinase D</shortName>
    </alternativeName>
</protein>
<name>A1KB1_LOXDE</name>